<accession>Q2SY71</accession>
<proteinExistence type="inferred from homology"/>
<feature type="chain" id="PRO_0000237446" description="DNA-directed RNA polymerase subunit omega">
    <location>
        <begin position="1"/>
        <end position="67"/>
    </location>
</feature>
<keyword id="KW-0240">DNA-directed RNA polymerase</keyword>
<keyword id="KW-0548">Nucleotidyltransferase</keyword>
<keyword id="KW-0804">Transcription</keyword>
<keyword id="KW-0808">Transferase</keyword>
<reference key="1">
    <citation type="journal article" date="2005" name="BMC Genomics">
        <title>Bacterial genome adaptation to niches: divergence of the potential virulence genes in three Burkholderia species of different survival strategies.</title>
        <authorList>
            <person name="Kim H.S."/>
            <person name="Schell M.A."/>
            <person name="Yu Y."/>
            <person name="Ulrich R.L."/>
            <person name="Sarria S.H."/>
            <person name="Nierman W.C."/>
            <person name="DeShazer D."/>
        </authorList>
    </citation>
    <scope>NUCLEOTIDE SEQUENCE [LARGE SCALE GENOMIC DNA]</scope>
    <source>
        <strain>ATCC 700388 / DSM 13276 / CCUG 48851 / CIP 106301 / E264</strain>
    </source>
</reference>
<dbReference type="EC" id="2.7.7.6" evidence="1"/>
<dbReference type="EMBL" id="CP000086">
    <property type="protein sequence ID" value="ABC38471.1"/>
    <property type="molecule type" value="Genomic_DNA"/>
</dbReference>
<dbReference type="RefSeq" id="WP_006025620.1">
    <property type="nucleotide sequence ID" value="NZ_CP008785.1"/>
</dbReference>
<dbReference type="SMR" id="Q2SY71"/>
<dbReference type="GeneID" id="98102617"/>
<dbReference type="KEGG" id="bte:BTH_I1587"/>
<dbReference type="HOGENOM" id="CLU_125406_5_2_4"/>
<dbReference type="Proteomes" id="UP000001930">
    <property type="component" value="Chromosome I"/>
</dbReference>
<dbReference type="GO" id="GO:0000428">
    <property type="term" value="C:DNA-directed RNA polymerase complex"/>
    <property type="evidence" value="ECO:0007669"/>
    <property type="project" value="UniProtKB-KW"/>
</dbReference>
<dbReference type="GO" id="GO:0003677">
    <property type="term" value="F:DNA binding"/>
    <property type="evidence" value="ECO:0007669"/>
    <property type="project" value="UniProtKB-UniRule"/>
</dbReference>
<dbReference type="GO" id="GO:0003899">
    <property type="term" value="F:DNA-directed RNA polymerase activity"/>
    <property type="evidence" value="ECO:0007669"/>
    <property type="project" value="UniProtKB-UniRule"/>
</dbReference>
<dbReference type="GO" id="GO:0006351">
    <property type="term" value="P:DNA-templated transcription"/>
    <property type="evidence" value="ECO:0007669"/>
    <property type="project" value="UniProtKB-UniRule"/>
</dbReference>
<dbReference type="Gene3D" id="3.90.940.10">
    <property type="match status" value="1"/>
</dbReference>
<dbReference type="HAMAP" id="MF_00366">
    <property type="entry name" value="RNApol_bact_RpoZ"/>
    <property type="match status" value="1"/>
</dbReference>
<dbReference type="InterPro" id="IPR003716">
    <property type="entry name" value="DNA-dir_RNA_pol_omega"/>
</dbReference>
<dbReference type="InterPro" id="IPR006110">
    <property type="entry name" value="Pol_omega/Rpo6/RPB6"/>
</dbReference>
<dbReference type="InterPro" id="IPR036161">
    <property type="entry name" value="RPB6/omega-like_sf"/>
</dbReference>
<dbReference type="NCBIfam" id="TIGR00690">
    <property type="entry name" value="rpoZ"/>
    <property type="match status" value="1"/>
</dbReference>
<dbReference type="PANTHER" id="PTHR34476">
    <property type="entry name" value="DNA-DIRECTED RNA POLYMERASE SUBUNIT OMEGA"/>
    <property type="match status" value="1"/>
</dbReference>
<dbReference type="PANTHER" id="PTHR34476:SF1">
    <property type="entry name" value="DNA-DIRECTED RNA POLYMERASE SUBUNIT OMEGA"/>
    <property type="match status" value="1"/>
</dbReference>
<dbReference type="Pfam" id="PF01192">
    <property type="entry name" value="RNA_pol_Rpb6"/>
    <property type="match status" value="1"/>
</dbReference>
<dbReference type="SMART" id="SM01409">
    <property type="entry name" value="RNA_pol_Rpb6"/>
    <property type="match status" value="1"/>
</dbReference>
<dbReference type="SUPFAM" id="SSF63562">
    <property type="entry name" value="RPB6/omega subunit-like"/>
    <property type="match status" value="1"/>
</dbReference>
<protein>
    <recommendedName>
        <fullName evidence="1">DNA-directed RNA polymerase subunit omega</fullName>
        <shortName evidence="1">RNAP omega subunit</shortName>
        <ecNumber evidence="1">2.7.7.6</ecNumber>
    </recommendedName>
    <alternativeName>
        <fullName evidence="1">RNA polymerase omega subunit</fullName>
    </alternativeName>
    <alternativeName>
        <fullName evidence="1">Transcriptase subunit omega</fullName>
    </alternativeName>
</protein>
<comment type="function">
    <text evidence="1">Promotes RNA polymerase assembly. Latches the N- and C-terminal regions of the beta' subunit thereby facilitating its interaction with the beta and alpha subunits.</text>
</comment>
<comment type="catalytic activity">
    <reaction evidence="1">
        <text>RNA(n) + a ribonucleoside 5'-triphosphate = RNA(n+1) + diphosphate</text>
        <dbReference type="Rhea" id="RHEA:21248"/>
        <dbReference type="Rhea" id="RHEA-COMP:14527"/>
        <dbReference type="Rhea" id="RHEA-COMP:17342"/>
        <dbReference type="ChEBI" id="CHEBI:33019"/>
        <dbReference type="ChEBI" id="CHEBI:61557"/>
        <dbReference type="ChEBI" id="CHEBI:140395"/>
        <dbReference type="EC" id="2.7.7.6"/>
    </reaction>
</comment>
<comment type="subunit">
    <text evidence="1">The RNAP catalytic core consists of 2 alpha, 1 beta, 1 beta' and 1 omega subunit. When a sigma factor is associated with the core the holoenzyme is formed, which can initiate transcription.</text>
</comment>
<comment type="similarity">
    <text evidence="1">Belongs to the RNA polymerase subunit omega family.</text>
</comment>
<gene>
    <name evidence="1" type="primary">rpoZ</name>
    <name type="ordered locus">BTH_I1587</name>
</gene>
<sequence length="67" mass="7428">MARITVEDCLKQIPNRFELALAATYRARQLAQGHTPKIESRDKPTVVALREIAAGQVGVEMLKKVPV</sequence>
<organism>
    <name type="scientific">Burkholderia thailandensis (strain ATCC 700388 / DSM 13276 / CCUG 48851 / CIP 106301 / E264)</name>
    <dbReference type="NCBI Taxonomy" id="271848"/>
    <lineage>
        <taxon>Bacteria</taxon>
        <taxon>Pseudomonadati</taxon>
        <taxon>Pseudomonadota</taxon>
        <taxon>Betaproteobacteria</taxon>
        <taxon>Burkholderiales</taxon>
        <taxon>Burkholderiaceae</taxon>
        <taxon>Burkholderia</taxon>
        <taxon>pseudomallei group</taxon>
    </lineage>
</organism>
<name>RPOZ_BURTA</name>
<evidence type="ECO:0000255" key="1">
    <source>
        <dbReference type="HAMAP-Rule" id="MF_00366"/>
    </source>
</evidence>